<proteinExistence type="evidence at protein level"/>
<name>BMP15_HUMAN</name>
<comment type="function">
    <text evidence="7">May be involved in follicular development. Oocyte-specific growth/differentiation factor that stimulates folliculogenesis and granulosa cell (GC) growth.</text>
</comment>
<comment type="subunit">
    <text>Homodimer. But, in contrast to other members of this family, cannot be disulfide-linked.</text>
</comment>
<comment type="interaction">
    <interactant intactId="EBI-12594867">
        <id>O95972</id>
    </interactant>
    <interactant intactId="EBI-2559044">
        <id>Q58WW2</id>
        <label>DCAF6</label>
    </interactant>
    <organismsDiffer>false</organismsDiffer>
    <experiments>2</experiments>
</comment>
<comment type="subcellular location">
    <subcellularLocation>
        <location>Secreted</location>
    </subcellularLocation>
</comment>
<comment type="disease" evidence="3">
    <disease id="DI-02116">
        <name>Ovarian dysgenesis 2</name>
        <acronym>ODG2</acronym>
        <description>A disorder characterized by lack of spontaneous pubertal development, primary amenorrhea, uterine hypoplasia, and hypergonadotropic hypogonadism as a result of streak gonads.</description>
        <dbReference type="MIM" id="300510"/>
    </disease>
    <text>The disease is caused by variants affecting the gene represented in this entry.</text>
</comment>
<comment type="disease" evidence="4 5 6 8 9">
    <disease id="DI-02194">
        <name>Premature ovarian failure 4</name>
        <acronym>POF4</acronym>
        <description>An ovarian disorder defined as the cessation of ovarian function under the age of 40 years. It is characterized by oligomenorrhea or amenorrhea, in the presence of elevated levels of serum gonadotropins and low estradiol.</description>
        <dbReference type="MIM" id="300510"/>
    </disease>
    <text>The disease is caused by variants affecting the gene represented in this entry.</text>
</comment>
<comment type="miscellaneous">
    <text>The mature protein migrates in two distinct mature proteins, P16 (16KDa) and P17 (17KDa).</text>
</comment>
<comment type="miscellaneous">
    <text>Ovarian physiology and fertility are controlled by endocrine and paracrine signals. These act in a species-dependent manner and determine the ovulation quota in different mammalian species. While humans, and mammals such as the cow or red deer, normally ovulate only one egg per cycle, other mammals such as mouse and pig can ovulate in excess of ten per cycle. The mechanisms that regulate the species-specific differences in the number of follicles that go onto ovulate during each reproductive cycle are poorly understood. According to PubMed:21970812, mRNA expression levels of GDF9 and BMP15 are tightly coregulated within each species and influence species-specific ovulation-rates.</text>
</comment>
<comment type="similarity">
    <text evidence="12">Belongs to the TGF-beta family.</text>
</comment>
<sequence length="392" mass="45055">MVLLSILRILFLCELVLFMEHRAQMAEGGQSSIALLAEAPTLPLIEELLEESPGEQPRKPRLLGHSLRYMLELYRRSADSHGHPRENRTIGATMVRLVKPLTNVARPHRGTWHIQILGFPLRPNRGLYQLVRATVVYRHHLQLTRFNLSCHVEPWVQKNPTNHFPSSEGDSSKPSLMSNAWKEMDITQLVQQRFWNNKGHRILRLRFMCQQQKDSGGLELWHGTSSLDIAFLLLYFNDTHKSIRKAKFLPRGMEEFMERESLLRRTRQADGISAEVTASSSKHSGPENNQCSLHPFQISFRQLGWDHWIIAPPFYTPNYCKGTCLRVLRDGLNSPNHAIIQNLINQLVDQSVPRPSCVPYKYVPISVLMIEANGSILYKEYEGMIAESCTCR</sequence>
<protein>
    <recommendedName>
        <fullName>Bone morphogenetic protein 15</fullName>
        <shortName>BMP-15</shortName>
    </recommendedName>
    <alternativeName>
        <fullName>Growth/differentiation factor 9B</fullName>
        <shortName>GDF-9B</shortName>
    </alternativeName>
</protein>
<gene>
    <name type="primary">BMP15</name>
    <name type="synonym">GDF9B</name>
</gene>
<accession>O95972</accession>
<accession>Q17RM6</accession>
<accession>Q5JST1</accession>
<accession>Q9UMS1</accession>
<dbReference type="EMBL" id="AF082350">
    <property type="protein sequence ID" value="AAC99768.1"/>
    <property type="molecule type" value="Genomic_DNA"/>
</dbReference>
<dbReference type="EMBL" id="AF082349">
    <property type="protein sequence ID" value="AAC99768.1"/>
    <property type="status" value="JOINED"/>
    <property type="molecule type" value="Genomic_DNA"/>
</dbReference>
<dbReference type="EMBL" id="AJ132405">
    <property type="protein sequence ID" value="CAB43531.1"/>
    <property type="molecule type" value="Genomic_DNA"/>
</dbReference>
<dbReference type="EMBL" id="AL359914">
    <property type="status" value="NOT_ANNOTATED_CDS"/>
    <property type="molecule type" value="Genomic_DNA"/>
</dbReference>
<dbReference type="EMBL" id="BC069155">
    <property type="protein sequence ID" value="AAH69155.1"/>
    <property type="molecule type" value="mRNA"/>
</dbReference>
<dbReference type="EMBL" id="BC117264">
    <property type="protein sequence ID" value="AAI17265.1"/>
    <property type="molecule type" value="mRNA"/>
</dbReference>
<dbReference type="EMBL" id="BC117266">
    <property type="protein sequence ID" value="AAI17267.1"/>
    <property type="molecule type" value="mRNA"/>
</dbReference>
<dbReference type="CCDS" id="CCDS14334.1"/>
<dbReference type="RefSeq" id="NP_005439.2">
    <property type="nucleotide sequence ID" value="NM_005448.2"/>
</dbReference>
<dbReference type="BioGRID" id="114644">
    <property type="interactions" value="5"/>
</dbReference>
<dbReference type="FunCoup" id="O95972">
    <property type="interactions" value="328"/>
</dbReference>
<dbReference type="IntAct" id="O95972">
    <property type="interactions" value="5"/>
</dbReference>
<dbReference type="MINT" id="O95972"/>
<dbReference type="STRING" id="9606.ENSP00000252677"/>
<dbReference type="GlyCosmos" id="O95972">
    <property type="glycosylation" value="5 sites, No reported glycans"/>
</dbReference>
<dbReference type="GlyGen" id="O95972">
    <property type="glycosylation" value="5 sites"/>
</dbReference>
<dbReference type="iPTMnet" id="O95972"/>
<dbReference type="PhosphoSitePlus" id="O95972"/>
<dbReference type="BioMuta" id="BMP15"/>
<dbReference type="jPOST" id="O95972"/>
<dbReference type="MassIVE" id="O95972"/>
<dbReference type="PaxDb" id="9606-ENSP00000252677"/>
<dbReference type="PeptideAtlas" id="O95972"/>
<dbReference type="ProteomicsDB" id="51155"/>
<dbReference type="Antibodypedia" id="26314">
    <property type="antibodies" value="355 antibodies from 38 providers"/>
</dbReference>
<dbReference type="DNASU" id="9210"/>
<dbReference type="Ensembl" id="ENST00000252677.4">
    <property type="protein sequence ID" value="ENSP00000252677.3"/>
    <property type="gene ID" value="ENSG00000130385.6"/>
</dbReference>
<dbReference type="GeneID" id="9210"/>
<dbReference type="KEGG" id="hsa:9210"/>
<dbReference type="MANE-Select" id="ENST00000252677.4">
    <property type="protein sequence ID" value="ENSP00000252677.3"/>
    <property type="RefSeq nucleotide sequence ID" value="NM_005448.2"/>
    <property type="RefSeq protein sequence ID" value="NP_005439.2"/>
</dbReference>
<dbReference type="UCSC" id="uc011mnw.3">
    <property type="organism name" value="human"/>
</dbReference>
<dbReference type="AGR" id="HGNC:1068"/>
<dbReference type="CTD" id="9210"/>
<dbReference type="DisGeNET" id="9210"/>
<dbReference type="GeneCards" id="BMP15"/>
<dbReference type="HGNC" id="HGNC:1068">
    <property type="gene designation" value="BMP15"/>
</dbReference>
<dbReference type="HPA" id="ENSG00000130385">
    <property type="expression patterns" value="Not detected"/>
</dbReference>
<dbReference type="MalaCards" id="BMP15"/>
<dbReference type="MIM" id="300247">
    <property type="type" value="gene"/>
</dbReference>
<dbReference type="MIM" id="300510">
    <property type="type" value="phenotype"/>
</dbReference>
<dbReference type="neXtProt" id="NX_O95972"/>
<dbReference type="OpenTargets" id="ENSG00000130385"/>
<dbReference type="Orphanet" id="243">
    <property type="disease" value="46,XX gonadal dysgenesis"/>
</dbReference>
<dbReference type="PharmGKB" id="PA25378"/>
<dbReference type="VEuPathDB" id="HostDB:ENSG00000130385"/>
<dbReference type="eggNOG" id="KOG3900">
    <property type="taxonomic scope" value="Eukaryota"/>
</dbReference>
<dbReference type="GeneTree" id="ENSGT00940000160940"/>
<dbReference type="HOGENOM" id="CLU_055377_0_0_1"/>
<dbReference type="InParanoid" id="O95972"/>
<dbReference type="OMA" id="VYRHQLH"/>
<dbReference type="OrthoDB" id="6427922at2759"/>
<dbReference type="PAN-GO" id="O95972">
    <property type="GO annotations" value="6 GO annotations based on evolutionary models"/>
</dbReference>
<dbReference type="PhylomeDB" id="O95972"/>
<dbReference type="TreeFam" id="TF316134"/>
<dbReference type="PathwayCommons" id="O95972"/>
<dbReference type="Reactome" id="R-HSA-381426">
    <property type="pathway name" value="Regulation of Insulin-like Growth Factor (IGF) transport and uptake by Insulin-like Growth Factor Binding Proteins (IGFBPs)"/>
</dbReference>
<dbReference type="Reactome" id="R-HSA-8957275">
    <property type="pathway name" value="Post-translational protein phosphorylation"/>
</dbReference>
<dbReference type="SignaLink" id="O95972"/>
<dbReference type="SIGNOR" id="O95972"/>
<dbReference type="BioGRID-ORCS" id="9210">
    <property type="hits" value="16 hits in 769 CRISPR screens"/>
</dbReference>
<dbReference type="GeneWiki" id="Bone_morphogenetic_protein_15"/>
<dbReference type="GenomeRNAi" id="9210"/>
<dbReference type="Pharos" id="O95972">
    <property type="development level" value="Tbio"/>
</dbReference>
<dbReference type="PRO" id="PR:O95972"/>
<dbReference type="Proteomes" id="UP000005640">
    <property type="component" value="Chromosome X"/>
</dbReference>
<dbReference type="RNAct" id="O95972">
    <property type="molecule type" value="protein"/>
</dbReference>
<dbReference type="Bgee" id="ENSG00000130385">
    <property type="expression patterns" value="Expressed in secondary oocyte and 5 other cell types or tissues"/>
</dbReference>
<dbReference type="GO" id="GO:0005788">
    <property type="term" value="C:endoplasmic reticulum lumen"/>
    <property type="evidence" value="ECO:0000304"/>
    <property type="project" value="Reactome"/>
</dbReference>
<dbReference type="GO" id="GO:0005615">
    <property type="term" value="C:extracellular space"/>
    <property type="evidence" value="ECO:0000318"/>
    <property type="project" value="GO_Central"/>
</dbReference>
<dbReference type="GO" id="GO:0005125">
    <property type="term" value="F:cytokine activity"/>
    <property type="evidence" value="ECO:0000318"/>
    <property type="project" value="GO_Central"/>
</dbReference>
<dbReference type="GO" id="GO:0008083">
    <property type="term" value="F:growth factor activity"/>
    <property type="evidence" value="ECO:0007669"/>
    <property type="project" value="UniProtKB-KW"/>
</dbReference>
<dbReference type="GO" id="GO:0007292">
    <property type="term" value="P:female gamete generation"/>
    <property type="evidence" value="ECO:0000304"/>
    <property type="project" value="ProtInc"/>
</dbReference>
<dbReference type="CDD" id="cd19402">
    <property type="entry name" value="TGF_beta_GDF9B"/>
    <property type="match status" value="1"/>
</dbReference>
<dbReference type="FunFam" id="2.10.90.10:FF:000012">
    <property type="entry name" value="Growth/differentiation factor 9 (Predicted)"/>
    <property type="match status" value="1"/>
</dbReference>
<dbReference type="Gene3D" id="2.10.90.10">
    <property type="entry name" value="Cystine-knot cytokines"/>
    <property type="match status" value="1"/>
</dbReference>
<dbReference type="InterPro" id="IPR029034">
    <property type="entry name" value="Cystine-knot_cytokine"/>
</dbReference>
<dbReference type="InterPro" id="IPR001839">
    <property type="entry name" value="TGF-b_C"/>
</dbReference>
<dbReference type="InterPro" id="IPR015615">
    <property type="entry name" value="TGF-beta-rel"/>
</dbReference>
<dbReference type="InterPro" id="IPR017948">
    <property type="entry name" value="TGFb_CS"/>
</dbReference>
<dbReference type="PANTHER" id="PTHR11848:SF22">
    <property type="entry name" value="BONE MORPHOGENETIC PROTEIN 15"/>
    <property type="match status" value="1"/>
</dbReference>
<dbReference type="PANTHER" id="PTHR11848">
    <property type="entry name" value="TGF-BETA FAMILY"/>
    <property type="match status" value="1"/>
</dbReference>
<dbReference type="Pfam" id="PF00019">
    <property type="entry name" value="TGF_beta"/>
    <property type="match status" value="1"/>
</dbReference>
<dbReference type="PRINTS" id="PR00669">
    <property type="entry name" value="INHIBINA"/>
</dbReference>
<dbReference type="SMART" id="SM00204">
    <property type="entry name" value="TGFB"/>
    <property type="match status" value="1"/>
</dbReference>
<dbReference type="SUPFAM" id="SSF57501">
    <property type="entry name" value="Cystine-knot cytokines"/>
    <property type="match status" value="1"/>
</dbReference>
<dbReference type="PROSITE" id="PS00250">
    <property type="entry name" value="TGF_BETA_1"/>
    <property type="match status" value="1"/>
</dbReference>
<dbReference type="PROSITE" id="PS51362">
    <property type="entry name" value="TGF_BETA_2"/>
    <property type="match status" value="1"/>
</dbReference>
<reference key="1">
    <citation type="journal article" date="1998" name="Mol. Endocrinol.">
        <title>The bone morphogenetic protein 15 gene is X-linked and expressed in oocytes.</title>
        <authorList>
            <person name="Dube J.L."/>
            <person name="Wang P."/>
            <person name="Elvin J."/>
            <person name="Lyons K.M."/>
            <person name="Celeste A.J."/>
            <person name="Matzuk M.M."/>
        </authorList>
    </citation>
    <scope>NUCLEOTIDE SEQUENCE [GENOMIC DNA]</scope>
    <scope>VARIANT SER-103</scope>
</reference>
<reference key="2">
    <citation type="journal article" date="1999" name="J. Clin. Endocrinol. Metab.">
        <title>Human growth differentiation factor 9 (GDF-9) and its novel homolog GDF-9B are expressed in oocytes during early folliculogenesis.</title>
        <authorList>
            <person name="Aaltonen J."/>
            <person name="Laitinen M.P."/>
            <person name="Vuojolainen K."/>
            <person name="Jaatinen R."/>
            <person name="Horelli-Kuitunen N."/>
            <person name="Seppae L."/>
            <person name="Louhio H."/>
            <person name="Tuuri T."/>
            <person name="Sjoeberg J."/>
            <person name="Buetzow R."/>
            <person name="Hovatta O."/>
            <person name="Dale L."/>
            <person name="Ritvos O."/>
        </authorList>
    </citation>
    <scope>NUCLEOTIDE SEQUENCE [GENOMIC DNA]</scope>
</reference>
<reference key="3">
    <citation type="journal article" date="2005" name="Nature">
        <title>The DNA sequence of the human X chromosome.</title>
        <authorList>
            <person name="Ross M.T."/>
            <person name="Grafham D.V."/>
            <person name="Coffey A.J."/>
            <person name="Scherer S."/>
            <person name="McLay K."/>
            <person name="Muzny D."/>
            <person name="Platzer M."/>
            <person name="Howell G.R."/>
            <person name="Burrows C."/>
            <person name="Bird C.P."/>
            <person name="Frankish A."/>
            <person name="Lovell F.L."/>
            <person name="Howe K.L."/>
            <person name="Ashurst J.L."/>
            <person name="Fulton R.S."/>
            <person name="Sudbrak R."/>
            <person name="Wen G."/>
            <person name="Jones M.C."/>
            <person name="Hurles M.E."/>
            <person name="Andrews T.D."/>
            <person name="Scott C.E."/>
            <person name="Searle S."/>
            <person name="Ramser J."/>
            <person name="Whittaker A."/>
            <person name="Deadman R."/>
            <person name="Carter N.P."/>
            <person name="Hunt S.E."/>
            <person name="Chen R."/>
            <person name="Cree A."/>
            <person name="Gunaratne P."/>
            <person name="Havlak P."/>
            <person name="Hodgson A."/>
            <person name="Metzker M.L."/>
            <person name="Richards S."/>
            <person name="Scott G."/>
            <person name="Steffen D."/>
            <person name="Sodergren E."/>
            <person name="Wheeler D.A."/>
            <person name="Worley K.C."/>
            <person name="Ainscough R."/>
            <person name="Ambrose K.D."/>
            <person name="Ansari-Lari M.A."/>
            <person name="Aradhya S."/>
            <person name="Ashwell R.I."/>
            <person name="Babbage A.K."/>
            <person name="Bagguley C.L."/>
            <person name="Ballabio A."/>
            <person name="Banerjee R."/>
            <person name="Barker G.E."/>
            <person name="Barlow K.F."/>
            <person name="Barrett I.P."/>
            <person name="Bates K.N."/>
            <person name="Beare D.M."/>
            <person name="Beasley H."/>
            <person name="Beasley O."/>
            <person name="Beck A."/>
            <person name="Bethel G."/>
            <person name="Blechschmidt K."/>
            <person name="Brady N."/>
            <person name="Bray-Allen S."/>
            <person name="Bridgeman A.M."/>
            <person name="Brown A.J."/>
            <person name="Brown M.J."/>
            <person name="Bonnin D."/>
            <person name="Bruford E.A."/>
            <person name="Buhay C."/>
            <person name="Burch P."/>
            <person name="Burford D."/>
            <person name="Burgess J."/>
            <person name="Burrill W."/>
            <person name="Burton J."/>
            <person name="Bye J.M."/>
            <person name="Carder C."/>
            <person name="Carrel L."/>
            <person name="Chako J."/>
            <person name="Chapman J.C."/>
            <person name="Chavez D."/>
            <person name="Chen E."/>
            <person name="Chen G."/>
            <person name="Chen Y."/>
            <person name="Chen Z."/>
            <person name="Chinault C."/>
            <person name="Ciccodicola A."/>
            <person name="Clark S.Y."/>
            <person name="Clarke G."/>
            <person name="Clee C.M."/>
            <person name="Clegg S."/>
            <person name="Clerc-Blankenburg K."/>
            <person name="Clifford K."/>
            <person name="Cobley V."/>
            <person name="Cole C.G."/>
            <person name="Conquer J.S."/>
            <person name="Corby N."/>
            <person name="Connor R.E."/>
            <person name="David R."/>
            <person name="Davies J."/>
            <person name="Davis C."/>
            <person name="Davis J."/>
            <person name="Delgado O."/>
            <person name="Deshazo D."/>
            <person name="Dhami P."/>
            <person name="Ding Y."/>
            <person name="Dinh H."/>
            <person name="Dodsworth S."/>
            <person name="Draper H."/>
            <person name="Dugan-Rocha S."/>
            <person name="Dunham A."/>
            <person name="Dunn M."/>
            <person name="Durbin K.J."/>
            <person name="Dutta I."/>
            <person name="Eades T."/>
            <person name="Ellwood M."/>
            <person name="Emery-Cohen A."/>
            <person name="Errington H."/>
            <person name="Evans K.L."/>
            <person name="Faulkner L."/>
            <person name="Francis F."/>
            <person name="Frankland J."/>
            <person name="Fraser A.E."/>
            <person name="Galgoczy P."/>
            <person name="Gilbert J."/>
            <person name="Gill R."/>
            <person name="Gloeckner G."/>
            <person name="Gregory S.G."/>
            <person name="Gribble S."/>
            <person name="Griffiths C."/>
            <person name="Grocock R."/>
            <person name="Gu Y."/>
            <person name="Gwilliam R."/>
            <person name="Hamilton C."/>
            <person name="Hart E.A."/>
            <person name="Hawes A."/>
            <person name="Heath P.D."/>
            <person name="Heitmann K."/>
            <person name="Hennig S."/>
            <person name="Hernandez J."/>
            <person name="Hinzmann B."/>
            <person name="Ho S."/>
            <person name="Hoffs M."/>
            <person name="Howden P.J."/>
            <person name="Huckle E.J."/>
            <person name="Hume J."/>
            <person name="Hunt P.J."/>
            <person name="Hunt A.R."/>
            <person name="Isherwood J."/>
            <person name="Jacob L."/>
            <person name="Johnson D."/>
            <person name="Jones S."/>
            <person name="de Jong P.J."/>
            <person name="Joseph S.S."/>
            <person name="Keenan S."/>
            <person name="Kelly S."/>
            <person name="Kershaw J.K."/>
            <person name="Khan Z."/>
            <person name="Kioschis P."/>
            <person name="Klages S."/>
            <person name="Knights A.J."/>
            <person name="Kosiura A."/>
            <person name="Kovar-Smith C."/>
            <person name="Laird G.K."/>
            <person name="Langford C."/>
            <person name="Lawlor S."/>
            <person name="Leversha M."/>
            <person name="Lewis L."/>
            <person name="Liu W."/>
            <person name="Lloyd C."/>
            <person name="Lloyd D.M."/>
            <person name="Loulseged H."/>
            <person name="Loveland J.E."/>
            <person name="Lovell J.D."/>
            <person name="Lozado R."/>
            <person name="Lu J."/>
            <person name="Lyne R."/>
            <person name="Ma J."/>
            <person name="Maheshwari M."/>
            <person name="Matthews L.H."/>
            <person name="McDowall J."/>
            <person name="McLaren S."/>
            <person name="McMurray A."/>
            <person name="Meidl P."/>
            <person name="Meitinger T."/>
            <person name="Milne S."/>
            <person name="Miner G."/>
            <person name="Mistry S.L."/>
            <person name="Morgan M."/>
            <person name="Morris S."/>
            <person name="Mueller I."/>
            <person name="Mullikin J.C."/>
            <person name="Nguyen N."/>
            <person name="Nordsiek G."/>
            <person name="Nyakatura G."/>
            <person name="O'dell C.N."/>
            <person name="Okwuonu G."/>
            <person name="Palmer S."/>
            <person name="Pandian R."/>
            <person name="Parker D."/>
            <person name="Parrish J."/>
            <person name="Pasternak S."/>
            <person name="Patel D."/>
            <person name="Pearce A.V."/>
            <person name="Pearson D.M."/>
            <person name="Pelan S.E."/>
            <person name="Perez L."/>
            <person name="Porter K.M."/>
            <person name="Ramsey Y."/>
            <person name="Reichwald K."/>
            <person name="Rhodes S."/>
            <person name="Ridler K.A."/>
            <person name="Schlessinger D."/>
            <person name="Schueler M.G."/>
            <person name="Sehra H.K."/>
            <person name="Shaw-Smith C."/>
            <person name="Shen H."/>
            <person name="Sheridan E.M."/>
            <person name="Shownkeen R."/>
            <person name="Skuce C.D."/>
            <person name="Smith M.L."/>
            <person name="Sotheran E.C."/>
            <person name="Steingruber H.E."/>
            <person name="Steward C.A."/>
            <person name="Storey R."/>
            <person name="Swann R.M."/>
            <person name="Swarbreck D."/>
            <person name="Tabor P.E."/>
            <person name="Taudien S."/>
            <person name="Taylor T."/>
            <person name="Teague B."/>
            <person name="Thomas K."/>
            <person name="Thorpe A."/>
            <person name="Timms K."/>
            <person name="Tracey A."/>
            <person name="Trevanion S."/>
            <person name="Tromans A.C."/>
            <person name="d'Urso M."/>
            <person name="Verduzco D."/>
            <person name="Villasana D."/>
            <person name="Waldron L."/>
            <person name="Wall M."/>
            <person name="Wang Q."/>
            <person name="Warren J."/>
            <person name="Warry G.L."/>
            <person name="Wei X."/>
            <person name="West A."/>
            <person name="Whitehead S.L."/>
            <person name="Whiteley M.N."/>
            <person name="Wilkinson J.E."/>
            <person name="Willey D.L."/>
            <person name="Williams G."/>
            <person name="Williams L."/>
            <person name="Williamson A."/>
            <person name="Williamson H."/>
            <person name="Wilming L."/>
            <person name="Woodmansey R.L."/>
            <person name="Wray P.W."/>
            <person name="Yen J."/>
            <person name="Zhang J."/>
            <person name="Zhou J."/>
            <person name="Zoghbi H."/>
            <person name="Zorilla S."/>
            <person name="Buck D."/>
            <person name="Reinhardt R."/>
            <person name="Poustka A."/>
            <person name="Rosenthal A."/>
            <person name="Lehrach H."/>
            <person name="Meindl A."/>
            <person name="Minx P.J."/>
            <person name="Hillier L.W."/>
            <person name="Willard H.F."/>
            <person name="Wilson R.K."/>
            <person name="Waterston R.H."/>
            <person name="Rice C.M."/>
            <person name="Vaudin M."/>
            <person name="Coulson A."/>
            <person name="Nelson D.L."/>
            <person name="Weinstock G."/>
            <person name="Sulston J.E."/>
            <person name="Durbin R.M."/>
            <person name="Hubbard T."/>
            <person name="Gibbs R.A."/>
            <person name="Beck S."/>
            <person name="Rogers J."/>
            <person name="Bentley D.R."/>
        </authorList>
    </citation>
    <scope>NUCLEOTIDE SEQUENCE [LARGE SCALE GENOMIC DNA]</scope>
</reference>
<reference key="4">
    <citation type="journal article" date="2004" name="Genome Res.">
        <title>The status, quality, and expansion of the NIH full-length cDNA project: the Mammalian Gene Collection (MGC).</title>
        <authorList>
            <consortium name="The MGC Project Team"/>
        </authorList>
    </citation>
    <scope>NUCLEOTIDE SEQUENCE [LARGE SCALE MRNA]</scope>
</reference>
<reference key="5">
    <citation type="journal article" date="2008" name="Protein Sci.">
        <title>Characterization of the post-translational modification of recombinant human BMP-15 mature protein.</title>
        <authorList>
            <person name="Saito S."/>
            <person name="Yano K."/>
            <person name="Sharma S."/>
            <person name="McMahon H.E."/>
            <person name="Shimasaki S."/>
        </authorList>
    </citation>
    <scope>FUNCTION</scope>
    <scope>PYROGLUTAMATE FORMATION AT GLN-268</scope>
    <scope>PHOSPHORYLATION AT SER-273</scope>
    <scope>GLYCOSYLATION AT THR-277</scope>
    <scope>HOMODIMERIZATION</scope>
</reference>
<reference key="6">
    <citation type="journal article" date="2012" name="Mol. Cell. Endocrinol.">
        <title>The ratio of growth differentiation factor 9: bone morphogenetic protein 15 mRNA expression is tightly co-regulated and differs between species over a wide range of ovulation rates.</title>
        <authorList>
            <person name="Crawford J.L."/>
            <person name="McNatty K.P."/>
        </authorList>
    </citation>
    <scope>SPECIES-SPECIFIC OVULATION RATE DETERMINATION</scope>
</reference>
<reference key="7">
    <citation type="journal article" date="2004" name="Am. J. Hum. Genet.">
        <title>Hypergonadotropic ovarian failure associated with an inherited mutation of human bone morphogenetic protein-15 (BMP15) gene.</title>
        <authorList>
            <person name="Di Pasquale E."/>
            <person name="Beck-Peccoz P."/>
            <person name="Persani L."/>
        </authorList>
    </citation>
    <scope>VARIANT ODG2 CYS-235</scope>
    <scope>CHARACTERIZATION OF VARIANT ODG2 CYS-235</scope>
</reference>
<reference key="8">
    <citation type="journal article" date="2006" name="Eur. J. Endocrinol.">
        <title>Mutations and sequence variants in GDF9 and BMP15 in patients with premature ovarian failure.</title>
        <authorList>
            <person name="Laissue P."/>
            <person name="Christin-Maitre S."/>
            <person name="Touraine P."/>
            <person name="Kuttenn F."/>
            <person name="Ritvos O."/>
            <person name="Aittomaki K."/>
            <person name="Bourcigaux N."/>
            <person name="Jacquesson L."/>
            <person name="Bouchard P."/>
            <person name="Frydman R."/>
            <person name="Dewailly D."/>
            <person name="Reyss A.-C."/>
            <person name="Jeffery L."/>
            <person name="Bachelot A."/>
            <person name="Massin N."/>
            <person name="Fellous M."/>
            <person name="Veitia R.A."/>
        </authorList>
    </citation>
    <scope>VARIANTS POF4 PRO-148 AND THR-180</scope>
    <scope>VARIANT LEU-263 INS</scope>
</reference>
<reference key="9">
    <citation type="journal article" date="2006" name="Hum. Genet.">
        <title>Missense mutations in the BMP15 gene are associated with ovarian failure.</title>
        <authorList>
            <person name="Dixit H."/>
            <person name="Rao L.K."/>
            <person name="Padmalatha V.V."/>
            <person name="Kanakavalli M."/>
            <person name="Deenadayal M."/>
            <person name="Gupta N."/>
            <person name="Chakrabarty B."/>
            <person name="Singh L."/>
        </authorList>
    </citation>
    <scope>VARIANTS POF4 TRP-61; GLN-61; CYS-76; HIS-76; THR-180; LYS-196; HIS-206; ARG-221 AND VAL-243</scope>
    <scope>VARIANTS SER-103; PHE-180 AND LEU-263 INS</scope>
</reference>
<reference key="10">
    <citation type="journal article" date="2006" name="J. Clin. Endocrinol. Metab.">
        <title>Identification of new variants of human BMP15 gene in a large cohort of women with premature ovarian failure.</title>
        <authorList>
            <person name="Di Pasquale E."/>
            <person name="Rossetti R."/>
            <person name="Marozzi A."/>
            <person name="Bodega B."/>
            <person name="Borgato S."/>
            <person name="Cavallo L."/>
            <person name="Einaudi S."/>
            <person name="Radetti G."/>
            <person name="Russo G."/>
            <person name="Sacco M."/>
            <person name="Wasniewska M."/>
            <person name="Cole T."/>
            <person name="Beck-Peccoz P."/>
            <person name="Nelson L.M."/>
            <person name="Persani L."/>
        </authorList>
    </citation>
    <scope>VARIANTS POF4 TRP-68; THR-180 AND CYS-235</scope>
    <scope>VARIANT LEU-263 INS</scope>
</reference>
<reference key="11">
    <citation type="journal article" date="2009" name="Hum. Mutat.">
        <title>BMP15 mutations associated with primary ovarian insufficiency cause a defective production of bioactive protein.</title>
        <authorList>
            <person name="Rossetti R."/>
            <person name="Di Pasquale E."/>
            <person name="Marozzi A."/>
            <person name="Bione S."/>
            <person name="Toniolo D."/>
            <person name="Grammatico P."/>
            <person name="Nelson L.M."/>
            <person name="Beck-Peccoz P."/>
            <person name="Persani L."/>
        </authorList>
    </citation>
    <scope>VARIANTS POF4 TRP-68; HIS-138; PRO-148 AND THR-180</scope>
    <scope>VARIANTS ARG-5 AND LEU-263 INS</scope>
    <scope>CHARACTERIZATION OF VARIANTS POF4 TRP-68; HIS-138; PRO-148 AND THR-180</scope>
    <scope>CHARACTERIZATION OF VARIANTS ARG-5 AND LEU-263 INS</scope>
</reference>
<reference key="12">
    <citation type="journal article" date="2010" name="Clin. Endocrinol. (Oxf.)">
        <title>Analyses of growth differentiation factor 9 (GDF9) and bone morphogenetic protein 15 (BMP15) mutation in Chinese women with premature ovarian failure.</title>
        <authorList>
            <person name="Wang B."/>
            <person name="Wen Q."/>
            <person name="Ni F."/>
            <person name="Zhou S."/>
            <person name="Wang J."/>
            <person name="Cao Y."/>
            <person name="Ma X."/>
        </authorList>
    </citation>
    <scope>VARIANT TYR-200</scope>
    <scope>VARIANT POF4 CYS-329</scope>
</reference>
<reference key="13">
    <citation type="journal article" date="2017" name="Hum. Mutat.">
        <title>CSNK2B splice site mutations in patients cause intellectual disability with or without myoclonic epilepsy.</title>
        <authorList>
            <person name="Poirier K."/>
            <person name="Hubert L."/>
            <person name="Viot G."/>
            <person name="Rio M."/>
            <person name="Billuart P."/>
            <person name="Besmond C."/>
            <person name="Bienvenu T."/>
        </authorList>
    </citation>
    <scope>VARIANT TRP-68</scope>
</reference>
<evidence type="ECO:0000250" key="1"/>
<evidence type="ECO:0000255" key="2"/>
<evidence type="ECO:0000269" key="3">
    <source>
    </source>
</evidence>
<evidence type="ECO:0000269" key="4">
    <source>
    </source>
</evidence>
<evidence type="ECO:0000269" key="5">
    <source>
    </source>
</evidence>
<evidence type="ECO:0000269" key="6">
    <source>
    </source>
</evidence>
<evidence type="ECO:0000269" key="7">
    <source>
    </source>
</evidence>
<evidence type="ECO:0000269" key="8">
    <source>
    </source>
</evidence>
<evidence type="ECO:0000269" key="9">
    <source>
    </source>
</evidence>
<evidence type="ECO:0000269" key="10">
    <source>
    </source>
</evidence>
<evidence type="ECO:0000269" key="11">
    <source>
    </source>
</evidence>
<evidence type="ECO:0000305" key="12"/>
<feature type="signal peptide" evidence="2">
    <location>
        <begin position="1"/>
        <end position="18"/>
    </location>
</feature>
<feature type="propeptide" id="PRO_0000033892">
    <location>
        <begin position="19"/>
        <end position="267"/>
    </location>
</feature>
<feature type="chain" id="PRO_0000033893" description="Bone morphogenetic protein 15">
    <location>
        <begin position="268"/>
        <end position="392"/>
    </location>
</feature>
<feature type="modified residue" description="Pyrrolidone carboxylic acid; in P16 and P17" evidence="7">
    <location>
        <position position="268"/>
    </location>
</feature>
<feature type="modified residue" description="Phosphoserine; in P16" evidence="7">
    <location>
        <position position="273"/>
    </location>
</feature>
<feature type="glycosylation site" description="N-linked (GlcNAc...) asparagine" evidence="2">
    <location>
        <position position="87"/>
    </location>
</feature>
<feature type="glycosylation site" description="N-linked (GlcNAc...) asparagine" evidence="2">
    <location>
        <position position="147"/>
    </location>
</feature>
<feature type="glycosylation site" description="N-linked (GlcNAc...) asparagine" evidence="2">
    <location>
        <position position="237"/>
    </location>
</feature>
<feature type="glycosylation site" description="O-linked (HexNAc...) threonine; in P17" evidence="7">
    <location>
        <position position="277"/>
    </location>
</feature>
<feature type="glycosylation site" description="N-linked (GlcNAc...) asparagine" evidence="2">
    <location>
        <position position="373"/>
    </location>
</feature>
<feature type="disulfide bond" evidence="1">
    <location>
        <begin position="291"/>
        <end position="357"/>
    </location>
</feature>
<feature type="disulfide bond" evidence="1">
    <location>
        <begin position="320"/>
        <end position="389"/>
    </location>
</feature>
<feature type="disulfide bond" evidence="1">
    <location>
        <begin position="324"/>
        <end position="391"/>
    </location>
</feature>
<feature type="sequence variant" id="VAR_058974" description="No or minor deleterious effect observed; dbSNP:rs113099187." evidence="8">
    <original>S</original>
    <variation>R</variation>
    <location>
        <position position="5"/>
    </location>
</feature>
<feature type="sequence variant" id="VAR_058975" description="In POF4." evidence="5">
    <original>R</original>
    <variation>Q</variation>
    <location>
        <position position="61"/>
    </location>
</feature>
<feature type="sequence variant" id="VAR_058976" description="In POF4; dbSNP:rs144392417." evidence="5">
    <original>R</original>
    <variation>W</variation>
    <location>
        <position position="61"/>
    </location>
</feature>
<feature type="sequence variant" id="VAR_058977" description="In POF4; leads to marked reduction of mature protein production; does not generate a complete recovery of wild-type activity in granulosa cell line transfected with defective mutant and with equal amount of wild-type protein; dbSNP:rs104894763." evidence="4 8 10">
    <original>R</original>
    <variation>W</variation>
    <location>
        <position position="68"/>
    </location>
</feature>
<feature type="sequence variant" id="VAR_058978" description="In POF4; dbSNP:rs104894766." evidence="5">
    <original>R</original>
    <variation>C</variation>
    <location>
        <position position="76"/>
    </location>
</feature>
<feature type="sequence variant" id="VAR_058979" description="In POF4; dbSNP:rs1557279925." evidence="5">
    <original>R</original>
    <variation>H</variation>
    <location>
        <position position="76"/>
    </location>
</feature>
<feature type="sequence variant" id="VAR_058980" description="In dbSNP:rs41308602." evidence="5 11">
    <original>N</original>
    <variation>S</variation>
    <location>
        <position position="103"/>
    </location>
</feature>
<feature type="sequence variant" id="VAR_058981" description="In POF4; leads to marked reduction of mature protein production; does not generate a complete recovery of wild-type activity in granulosa cell line transfected with defective mutant and with equal amount of wild-type protein; dbSNP:rs371418883." evidence="8">
    <original>R</original>
    <variation>H</variation>
    <location>
        <position position="138"/>
    </location>
</feature>
<feature type="sequence variant" id="VAR_058982" description="In POF4; leads to marked reduction of mature protein production; does not generate a complete recovery of wild-type activity in granulosa cell line transfected with defective mutant and with equal amount of wild-type protein; dbSNP:rs114823607." evidence="6 8">
    <original>L</original>
    <variation>P</variation>
    <location>
        <position position="148"/>
    </location>
</feature>
<feature type="sequence variant" id="VAR_058983" description="Requires 2 nucleotide substitutions." evidence="5">
    <original>A</original>
    <variation>F</variation>
    <location>
        <position position="180"/>
    </location>
</feature>
<feature type="sequence variant" id="VAR_058984" description="In POF4; uncertain significance; no or minor deleterious effect detected; dbSNP:rs104894767." evidence="4 5 6 8">
    <original>A</original>
    <variation>T</variation>
    <location>
        <position position="180"/>
    </location>
</feature>
<feature type="sequence variant" id="VAR_058985" description="In POF4." evidence="5">
    <original>N</original>
    <variation>K</variation>
    <location>
        <position position="196"/>
    </location>
</feature>
<feature type="sequence variant" id="VAR_066932" description="In dbSNP:rs202165852." evidence="9">
    <original>H</original>
    <variation>Y</variation>
    <location>
        <position position="200"/>
    </location>
</feature>
<feature type="sequence variant" id="VAR_058986" description="In POF4; dbSNP:rs782516193." evidence="5">
    <original>R</original>
    <variation>H</variation>
    <location>
        <position position="206"/>
    </location>
</feature>
<feature type="sequence variant" id="VAR_058987" description="In POF4; dbSNP:rs375284458." evidence="5">
    <original>W</original>
    <variation>R</variation>
    <location>
        <position position="221"/>
    </location>
</feature>
<feature type="sequence variant" id="VAR_021195" description="In ODG2; dominant-negative effect; may cause relevant modifications in the conformation of the precursor protein possibly leading to altered processing and impaired activation of latent forms or to abnormal dimerization; dbSNP:rs104894765." evidence="3 4">
    <original>Y</original>
    <variation>C</variation>
    <location>
        <position position="235"/>
    </location>
</feature>
<feature type="sequence variant" id="VAR_058988" description="In POF4; dbSNP:rs782379521." evidence="5">
    <original>I</original>
    <variation>V</variation>
    <location>
        <position position="243"/>
    </location>
</feature>
<feature type="sequence variant" id="VAR_058989" description="No or minor deleterious effect detected." evidence="4 5 6 8">
    <original>L</original>
    <variation>LL</variation>
    <location>
        <position position="263"/>
    </location>
</feature>
<feature type="sequence variant" id="VAR_066933" description="In POF4; dbSNP:rs782375794." evidence="9">
    <original>R</original>
    <variation>C</variation>
    <location>
        <position position="329"/>
    </location>
</feature>
<organism>
    <name type="scientific">Homo sapiens</name>
    <name type="common">Human</name>
    <dbReference type="NCBI Taxonomy" id="9606"/>
    <lineage>
        <taxon>Eukaryota</taxon>
        <taxon>Metazoa</taxon>
        <taxon>Chordata</taxon>
        <taxon>Craniata</taxon>
        <taxon>Vertebrata</taxon>
        <taxon>Euteleostomi</taxon>
        <taxon>Mammalia</taxon>
        <taxon>Eutheria</taxon>
        <taxon>Euarchontoglires</taxon>
        <taxon>Primates</taxon>
        <taxon>Haplorrhini</taxon>
        <taxon>Catarrhini</taxon>
        <taxon>Hominidae</taxon>
        <taxon>Homo</taxon>
    </lineage>
</organism>
<keyword id="KW-0202">Cytokine</keyword>
<keyword id="KW-0225">Disease variant</keyword>
<keyword id="KW-1015">Disulfide bond</keyword>
<keyword id="KW-0325">Glycoprotein</keyword>
<keyword id="KW-0339">Growth factor</keyword>
<keyword id="KW-0597">Phosphoprotein</keyword>
<keyword id="KW-1066">Premature ovarian failure</keyword>
<keyword id="KW-1267">Proteomics identification</keyword>
<keyword id="KW-0873">Pyrrolidone carboxylic acid</keyword>
<keyword id="KW-1185">Reference proteome</keyword>
<keyword id="KW-0964">Secreted</keyword>
<keyword id="KW-0732">Signal</keyword>